<reference key="1">
    <citation type="journal article" date="2008" name="J. Bacteriol.">
        <title>The genome sequence of the tomato-pathogenic actinomycete Clavibacter michiganensis subsp. michiganensis NCPPB382 reveals a large island involved in pathogenicity.</title>
        <authorList>
            <person name="Gartemann K.-H."/>
            <person name="Abt B."/>
            <person name="Bekel T."/>
            <person name="Burger A."/>
            <person name="Engemann J."/>
            <person name="Fluegel M."/>
            <person name="Gaigalat L."/>
            <person name="Goesmann A."/>
            <person name="Graefen I."/>
            <person name="Kalinowski J."/>
            <person name="Kaup O."/>
            <person name="Kirchner O."/>
            <person name="Krause L."/>
            <person name="Linke B."/>
            <person name="McHardy A."/>
            <person name="Meyer F."/>
            <person name="Pohle S."/>
            <person name="Rueckert C."/>
            <person name="Schneiker S."/>
            <person name="Zellermann E.-M."/>
            <person name="Puehler A."/>
            <person name="Eichenlaub R."/>
            <person name="Kaiser O."/>
            <person name="Bartels D."/>
        </authorList>
    </citation>
    <scope>NUCLEOTIDE SEQUENCE [LARGE SCALE GENOMIC DNA]</scope>
    <source>
        <strain>NCPPB 382</strain>
    </source>
</reference>
<dbReference type="EMBL" id="AM711867">
    <property type="protein sequence ID" value="CAN02218.1"/>
    <property type="molecule type" value="Genomic_DNA"/>
</dbReference>
<dbReference type="RefSeq" id="WP_012038838.1">
    <property type="nucleotide sequence ID" value="NC_009480.1"/>
</dbReference>
<dbReference type="SMR" id="A5CSZ3"/>
<dbReference type="GeneID" id="92948147"/>
<dbReference type="KEGG" id="cmi:CMM_2148"/>
<dbReference type="eggNOG" id="COG0858">
    <property type="taxonomic scope" value="Bacteria"/>
</dbReference>
<dbReference type="HOGENOM" id="CLU_089475_0_0_11"/>
<dbReference type="OrthoDB" id="307788at2"/>
<dbReference type="Proteomes" id="UP000001564">
    <property type="component" value="Chromosome"/>
</dbReference>
<dbReference type="GO" id="GO:0005829">
    <property type="term" value="C:cytosol"/>
    <property type="evidence" value="ECO:0007669"/>
    <property type="project" value="TreeGrafter"/>
</dbReference>
<dbReference type="GO" id="GO:0043024">
    <property type="term" value="F:ribosomal small subunit binding"/>
    <property type="evidence" value="ECO:0007669"/>
    <property type="project" value="TreeGrafter"/>
</dbReference>
<dbReference type="GO" id="GO:0030490">
    <property type="term" value="P:maturation of SSU-rRNA"/>
    <property type="evidence" value="ECO:0007669"/>
    <property type="project" value="UniProtKB-UniRule"/>
</dbReference>
<dbReference type="Gene3D" id="3.30.300.20">
    <property type="match status" value="1"/>
</dbReference>
<dbReference type="HAMAP" id="MF_00003">
    <property type="entry name" value="RbfA"/>
    <property type="match status" value="1"/>
</dbReference>
<dbReference type="InterPro" id="IPR015946">
    <property type="entry name" value="KH_dom-like_a/b"/>
</dbReference>
<dbReference type="InterPro" id="IPR000238">
    <property type="entry name" value="RbfA"/>
</dbReference>
<dbReference type="InterPro" id="IPR023799">
    <property type="entry name" value="RbfA_dom_sf"/>
</dbReference>
<dbReference type="NCBIfam" id="TIGR00082">
    <property type="entry name" value="rbfA"/>
    <property type="match status" value="1"/>
</dbReference>
<dbReference type="PANTHER" id="PTHR33515">
    <property type="entry name" value="RIBOSOME-BINDING FACTOR A, CHLOROPLASTIC-RELATED"/>
    <property type="match status" value="1"/>
</dbReference>
<dbReference type="PANTHER" id="PTHR33515:SF1">
    <property type="entry name" value="RIBOSOME-BINDING FACTOR A, CHLOROPLASTIC-RELATED"/>
    <property type="match status" value="1"/>
</dbReference>
<dbReference type="Pfam" id="PF02033">
    <property type="entry name" value="RBFA"/>
    <property type="match status" value="1"/>
</dbReference>
<dbReference type="SUPFAM" id="SSF89919">
    <property type="entry name" value="Ribosome-binding factor A, RbfA"/>
    <property type="match status" value="1"/>
</dbReference>
<protein>
    <recommendedName>
        <fullName evidence="1">Ribosome-binding factor A</fullName>
    </recommendedName>
</protein>
<evidence type="ECO:0000255" key="1">
    <source>
        <dbReference type="HAMAP-Rule" id="MF_00003"/>
    </source>
</evidence>
<evidence type="ECO:0000256" key="2">
    <source>
        <dbReference type="SAM" id="MobiDB-lite"/>
    </source>
</evidence>
<comment type="function">
    <text evidence="1">One of several proteins that assist in the late maturation steps of the functional core of the 30S ribosomal subunit. Associates with free 30S ribosomal subunits (but not with 30S subunits that are part of 70S ribosomes or polysomes). Required for efficient processing of 16S rRNA. May interact with the 5'-terminal helix region of 16S rRNA.</text>
</comment>
<comment type="subunit">
    <text evidence="1">Monomer. Binds 30S ribosomal subunits, but not 50S ribosomal subunits or 70S ribosomes.</text>
</comment>
<comment type="subcellular location">
    <subcellularLocation>
        <location evidence="1">Cytoplasm</location>
    </subcellularLocation>
</comment>
<comment type="similarity">
    <text evidence="1">Belongs to the RbfA family.</text>
</comment>
<organism>
    <name type="scientific">Clavibacter michiganensis subsp. michiganensis (strain NCPPB 382)</name>
    <dbReference type="NCBI Taxonomy" id="443906"/>
    <lineage>
        <taxon>Bacteria</taxon>
        <taxon>Bacillati</taxon>
        <taxon>Actinomycetota</taxon>
        <taxon>Actinomycetes</taxon>
        <taxon>Micrococcales</taxon>
        <taxon>Microbacteriaceae</taxon>
        <taxon>Clavibacter</taxon>
    </lineage>
</organism>
<feature type="chain" id="PRO_1000000093" description="Ribosome-binding factor A">
    <location>
        <begin position="1"/>
        <end position="166"/>
    </location>
</feature>
<feature type="region of interest" description="Disordered" evidence="2">
    <location>
        <begin position="119"/>
        <end position="166"/>
    </location>
</feature>
<feature type="compositionally biased region" description="Acidic residues" evidence="2">
    <location>
        <begin position="143"/>
        <end position="154"/>
    </location>
</feature>
<sequence length="166" mass="18200">MVDHARARKMADRIKEIVARKLDRGIKDPRLGFVTVTDVRVTGDLQHASIFYTVYGTDEERADTAAALKSATGMLRSEVGKNITARLTPSLEFILDGVPENAAAIDALLEEARRRDADVQAQAKSGVYAGDEDPYVKPRVIGEDEDEDDEDGDDIDRSAPGYEPAH</sequence>
<keyword id="KW-0963">Cytoplasm</keyword>
<keyword id="KW-0690">Ribosome biogenesis</keyword>
<name>RBFA_CLAM3</name>
<proteinExistence type="inferred from homology"/>
<gene>
    <name evidence="1" type="primary">rbfA</name>
    <name type="ordered locus">CMM_2148</name>
</gene>
<accession>A5CSZ3</accession>